<reference key="1">
    <citation type="journal article" date="2010" name="Environ. Microbiol.">
        <title>The genome of Syntrophomonas wolfei: new insights into syntrophic metabolism and biohydrogen production.</title>
        <authorList>
            <person name="Sieber J.R."/>
            <person name="Sims D.R."/>
            <person name="Han C."/>
            <person name="Kim E."/>
            <person name="Lykidis A."/>
            <person name="Lapidus A.L."/>
            <person name="McDonnald E."/>
            <person name="Rohlin L."/>
            <person name="Culley D.E."/>
            <person name="Gunsalus R."/>
            <person name="McInerney M.J."/>
        </authorList>
    </citation>
    <scope>NUCLEOTIDE SEQUENCE [LARGE SCALE GENOMIC DNA]</scope>
    <source>
        <strain>DSM 2245B / Goettingen</strain>
    </source>
</reference>
<gene>
    <name evidence="1" type="primary">rpmH</name>
    <name type="ordered locus">Swol_2577</name>
</gene>
<protein>
    <recommendedName>
        <fullName evidence="1">Large ribosomal subunit protein bL34</fullName>
    </recommendedName>
    <alternativeName>
        <fullName evidence="3">50S ribosomal protein L34</fullName>
    </alternativeName>
</protein>
<proteinExistence type="inferred from homology"/>
<comment type="similarity">
    <text evidence="1">Belongs to the bacterial ribosomal protein bL34 family.</text>
</comment>
<feature type="chain" id="PRO_1000013481" description="Large ribosomal subunit protein bL34">
    <location>
        <begin position="1"/>
        <end position="44"/>
    </location>
</feature>
<feature type="region of interest" description="Disordered" evidence="2">
    <location>
        <begin position="1"/>
        <end position="44"/>
    </location>
</feature>
<feature type="compositionally biased region" description="Basic residues" evidence="2">
    <location>
        <begin position="1"/>
        <end position="16"/>
    </location>
</feature>
<feature type="compositionally biased region" description="Basic residues" evidence="2">
    <location>
        <begin position="31"/>
        <end position="44"/>
    </location>
</feature>
<dbReference type="EMBL" id="CP000448">
    <property type="protein sequence ID" value="ABI69863.1"/>
    <property type="molecule type" value="Genomic_DNA"/>
</dbReference>
<dbReference type="RefSeq" id="WP_011641943.1">
    <property type="nucleotide sequence ID" value="NC_008346.1"/>
</dbReference>
<dbReference type="SMR" id="Q0ATU1"/>
<dbReference type="STRING" id="335541.Swol_2577"/>
<dbReference type="KEGG" id="swo:Swol_2577"/>
<dbReference type="eggNOG" id="COG0230">
    <property type="taxonomic scope" value="Bacteria"/>
</dbReference>
<dbReference type="HOGENOM" id="CLU_129938_2_0_9"/>
<dbReference type="OrthoDB" id="9804164at2"/>
<dbReference type="Proteomes" id="UP000001968">
    <property type="component" value="Chromosome"/>
</dbReference>
<dbReference type="GO" id="GO:1990904">
    <property type="term" value="C:ribonucleoprotein complex"/>
    <property type="evidence" value="ECO:0007669"/>
    <property type="project" value="UniProtKB-KW"/>
</dbReference>
<dbReference type="GO" id="GO:0005840">
    <property type="term" value="C:ribosome"/>
    <property type="evidence" value="ECO:0007669"/>
    <property type="project" value="UniProtKB-KW"/>
</dbReference>
<dbReference type="GO" id="GO:0003735">
    <property type="term" value="F:structural constituent of ribosome"/>
    <property type="evidence" value="ECO:0007669"/>
    <property type="project" value="InterPro"/>
</dbReference>
<dbReference type="GO" id="GO:0006412">
    <property type="term" value="P:translation"/>
    <property type="evidence" value="ECO:0007669"/>
    <property type="project" value="UniProtKB-UniRule"/>
</dbReference>
<dbReference type="FunFam" id="1.10.287.3980:FF:000001">
    <property type="entry name" value="Mitochondrial ribosomal protein L34"/>
    <property type="match status" value="1"/>
</dbReference>
<dbReference type="Gene3D" id="1.10.287.3980">
    <property type="match status" value="1"/>
</dbReference>
<dbReference type="HAMAP" id="MF_00391">
    <property type="entry name" value="Ribosomal_bL34"/>
    <property type="match status" value="1"/>
</dbReference>
<dbReference type="InterPro" id="IPR000271">
    <property type="entry name" value="Ribosomal_bL34"/>
</dbReference>
<dbReference type="InterPro" id="IPR020939">
    <property type="entry name" value="Ribosomal_bL34_CS"/>
</dbReference>
<dbReference type="NCBIfam" id="TIGR01030">
    <property type="entry name" value="rpmH_bact"/>
    <property type="match status" value="1"/>
</dbReference>
<dbReference type="PANTHER" id="PTHR14503:SF4">
    <property type="entry name" value="LARGE RIBOSOMAL SUBUNIT PROTEIN BL34M"/>
    <property type="match status" value="1"/>
</dbReference>
<dbReference type="PANTHER" id="PTHR14503">
    <property type="entry name" value="MITOCHONDRIAL RIBOSOMAL PROTEIN 34 FAMILY MEMBER"/>
    <property type="match status" value="1"/>
</dbReference>
<dbReference type="Pfam" id="PF00468">
    <property type="entry name" value="Ribosomal_L34"/>
    <property type="match status" value="1"/>
</dbReference>
<dbReference type="PROSITE" id="PS00784">
    <property type="entry name" value="RIBOSOMAL_L34"/>
    <property type="match status" value="1"/>
</dbReference>
<name>RL34_SYNWW</name>
<keyword id="KW-1185">Reference proteome</keyword>
<keyword id="KW-0687">Ribonucleoprotein</keyword>
<keyword id="KW-0689">Ribosomal protein</keyword>
<sequence length="44" mass="5153">MKRTFQPKNRQRKREHGFRARMASAGGRKVLANRRKKGRKSISA</sequence>
<accession>Q0ATU1</accession>
<evidence type="ECO:0000255" key="1">
    <source>
        <dbReference type="HAMAP-Rule" id="MF_00391"/>
    </source>
</evidence>
<evidence type="ECO:0000256" key="2">
    <source>
        <dbReference type="SAM" id="MobiDB-lite"/>
    </source>
</evidence>
<evidence type="ECO:0000305" key="3"/>
<organism>
    <name type="scientific">Syntrophomonas wolfei subsp. wolfei (strain DSM 2245B / Goettingen)</name>
    <dbReference type="NCBI Taxonomy" id="335541"/>
    <lineage>
        <taxon>Bacteria</taxon>
        <taxon>Bacillati</taxon>
        <taxon>Bacillota</taxon>
        <taxon>Clostridia</taxon>
        <taxon>Eubacteriales</taxon>
        <taxon>Syntrophomonadaceae</taxon>
        <taxon>Syntrophomonas</taxon>
    </lineage>
</organism>